<evidence type="ECO:0000255" key="1">
    <source>
        <dbReference type="HAMAP-Rule" id="MF_01393"/>
    </source>
</evidence>
<keyword id="KW-0066">ATP synthesis</keyword>
<keyword id="KW-0997">Cell inner membrane</keyword>
<keyword id="KW-1003">Cell membrane</keyword>
<keyword id="KW-0138">CF(0)</keyword>
<keyword id="KW-0375">Hydrogen ion transport</keyword>
<keyword id="KW-0406">Ion transport</keyword>
<keyword id="KW-0472">Membrane</keyword>
<keyword id="KW-0812">Transmembrane</keyword>
<keyword id="KW-1133">Transmembrane helix</keyword>
<keyword id="KW-0813">Transport</keyword>
<proteinExistence type="inferred from homology"/>
<sequence>MSGQTTSEYISHHLSFLKTGDGFWNVHIDTLFFSILAAVIFLFVFSRVGKKATTGVPGKMQCLVEIVVEWVNGIVKENFHGPRNVVAPLALTIFCWVFIMNAIDLIPVDFLPQFAGLFGIHYLRAVPTADISATLGMSICVFFLILFYTIKSKGFKGLVKEYTLHPFNHWAFIPVNFILETVTLLAKPISLAFRLFGNMYAGELIFILIAVMYSANMAIAALGIPLHLAWAIFHILVITLQAFIFMMLTVVYLSIAYNKADH</sequence>
<comment type="function">
    <text evidence="1">Key component of the proton channel; it plays a direct role in the translocation of protons across the membrane.</text>
</comment>
<comment type="subunit">
    <text evidence="1">F-type ATPases have 2 components, CF(1) - the catalytic core - and CF(0) - the membrane proton channel. CF(1) has five subunits: alpha(3), beta(3), gamma(1), delta(1), epsilon(1). CF(0) has three main subunits: a(1), b(2) and c(9-12). The alpha and beta chains form an alternating ring which encloses part of the gamma chain. CF(1) is attached to CF(0) by a central stalk formed by the gamma and epsilon chains, while a peripheral stalk is formed by the delta and b chains.</text>
</comment>
<comment type="subcellular location">
    <subcellularLocation>
        <location evidence="1">Cell inner membrane</location>
        <topology evidence="1">Multi-pass membrane protein</topology>
    </subcellularLocation>
</comment>
<comment type="similarity">
    <text evidence="1">Belongs to the ATPase A chain family.</text>
</comment>
<name>ATP6_HAEI8</name>
<reference key="1">
    <citation type="journal article" date="2005" name="J. Bacteriol.">
        <title>Genomic sequence of an otitis media isolate of nontypeable Haemophilus influenzae: comparative study with H. influenzae serotype d, strain KW20.</title>
        <authorList>
            <person name="Harrison A."/>
            <person name="Dyer D.W."/>
            <person name="Gillaspy A."/>
            <person name="Ray W.C."/>
            <person name="Mungur R."/>
            <person name="Carson M.B."/>
            <person name="Zhong H."/>
            <person name="Gipson J."/>
            <person name="Gipson M."/>
            <person name="Johnson L.S."/>
            <person name="Lewis L."/>
            <person name="Bakaletz L.O."/>
            <person name="Munson R.S. Jr."/>
        </authorList>
    </citation>
    <scope>NUCLEOTIDE SEQUENCE [LARGE SCALE GENOMIC DNA]</scope>
    <source>
        <strain>86-028NP</strain>
    </source>
</reference>
<dbReference type="EMBL" id="CP000057">
    <property type="protein sequence ID" value="AAX87539.1"/>
    <property type="molecule type" value="Genomic_DNA"/>
</dbReference>
<dbReference type="RefSeq" id="WP_005629251.1">
    <property type="nucleotide sequence ID" value="NC_007146.2"/>
</dbReference>
<dbReference type="SMR" id="Q4QN58"/>
<dbReference type="GeneID" id="93219498"/>
<dbReference type="KEGG" id="hit:NTHI0615"/>
<dbReference type="HOGENOM" id="CLU_041018_1_0_6"/>
<dbReference type="Proteomes" id="UP000002525">
    <property type="component" value="Chromosome"/>
</dbReference>
<dbReference type="GO" id="GO:0005886">
    <property type="term" value="C:plasma membrane"/>
    <property type="evidence" value="ECO:0007669"/>
    <property type="project" value="UniProtKB-SubCell"/>
</dbReference>
<dbReference type="GO" id="GO:0045259">
    <property type="term" value="C:proton-transporting ATP synthase complex"/>
    <property type="evidence" value="ECO:0007669"/>
    <property type="project" value="UniProtKB-KW"/>
</dbReference>
<dbReference type="GO" id="GO:0046933">
    <property type="term" value="F:proton-transporting ATP synthase activity, rotational mechanism"/>
    <property type="evidence" value="ECO:0007669"/>
    <property type="project" value="UniProtKB-UniRule"/>
</dbReference>
<dbReference type="GO" id="GO:0042777">
    <property type="term" value="P:proton motive force-driven plasma membrane ATP synthesis"/>
    <property type="evidence" value="ECO:0007669"/>
    <property type="project" value="TreeGrafter"/>
</dbReference>
<dbReference type="CDD" id="cd00310">
    <property type="entry name" value="ATP-synt_Fo_a_6"/>
    <property type="match status" value="1"/>
</dbReference>
<dbReference type="FunFam" id="1.20.120.220:FF:000002">
    <property type="entry name" value="ATP synthase subunit a"/>
    <property type="match status" value="1"/>
</dbReference>
<dbReference type="Gene3D" id="1.20.120.220">
    <property type="entry name" value="ATP synthase, F0 complex, subunit A"/>
    <property type="match status" value="1"/>
</dbReference>
<dbReference type="HAMAP" id="MF_01393">
    <property type="entry name" value="ATP_synth_a_bact"/>
    <property type="match status" value="1"/>
</dbReference>
<dbReference type="InterPro" id="IPR045082">
    <property type="entry name" value="ATP_syn_F0_a_bact/chloroplast"/>
</dbReference>
<dbReference type="InterPro" id="IPR000568">
    <property type="entry name" value="ATP_synth_F0_asu"/>
</dbReference>
<dbReference type="InterPro" id="IPR023011">
    <property type="entry name" value="ATP_synth_F0_asu_AS"/>
</dbReference>
<dbReference type="InterPro" id="IPR035908">
    <property type="entry name" value="F0_ATP_A_sf"/>
</dbReference>
<dbReference type="NCBIfam" id="TIGR01131">
    <property type="entry name" value="ATP_synt_6_or_A"/>
    <property type="match status" value="1"/>
</dbReference>
<dbReference type="NCBIfam" id="NF004477">
    <property type="entry name" value="PRK05815.1-1"/>
    <property type="match status" value="1"/>
</dbReference>
<dbReference type="PANTHER" id="PTHR42823">
    <property type="entry name" value="ATP SYNTHASE SUBUNIT A, CHLOROPLASTIC"/>
    <property type="match status" value="1"/>
</dbReference>
<dbReference type="PANTHER" id="PTHR42823:SF3">
    <property type="entry name" value="ATP SYNTHASE SUBUNIT A, CHLOROPLASTIC"/>
    <property type="match status" value="1"/>
</dbReference>
<dbReference type="Pfam" id="PF00119">
    <property type="entry name" value="ATP-synt_A"/>
    <property type="match status" value="1"/>
</dbReference>
<dbReference type="PRINTS" id="PR00123">
    <property type="entry name" value="ATPASEA"/>
</dbReference>
<dbReference type="SUPFAM" id="SSF81336">
    <property type="entry name" value="F1F0 ATP synthase subunit A"/>
    <property type="match status" value="1"/>
</dbReference>
<dbReference type="PROSITE" id="PS00449">
    <property type="entry name" value="ATPASE_A"/>
    <property type="match status" value="1"/>
</dbReference>
<organism>
    <name type="scientific">Haemophilus influenzae (strain 86-028NP)</name>
    <dbReference type="NCBI Taxonomy" id="281310"/>
    <lineage>
        <taxon>Bacteria</taxon>
        <taxon>Pseudomonadati</taxon>
        <taxon>Pseudomonadota</taxon>
        <taxon>Gammaproteobacteria</taxon>
        <taxon>Pasteurellales</taxon>
        <taxon>Pasteurellaceae</taxon>
        <taxon>Haemophilus</taxon>
    </lineage>
</organism>
<accession>Q4QN58</accession>
<gene>
    <name evidence="1" type="primary">atpB</name>
    <name type="ordered locus">NTHI0615</name>
</gene>
<feature type="chain" id="PRO_0000362320" description="ATP synthase subunit a">
    <location>
        <begin position="1"/>
        <end position="262"/>
    </location>
</feature>
<feature type="transmembrane region" description="Helical" evidence="1">
    <location>
        <begin position="26"/>
        <end position="46"/>
    </location>
</feature>
<feature type="transmembrane region" description="Helical" evidence="1">
    <location>
        <begin position="86"/>
        <end position="106"/>
    </location>
</feature>
<feature type="transmembrane region" description="Helical" evidence="1">
    <location>
        <begin position="130"/>
        <end position="150"/>
    </location>
</feature>
<feature type="transmembrane region" description="Helical" evidence="1">
    <location>
        <begin position="204"/>
        <end position="226"/>
    </location>
</feature>
<feature type="transmembrane region" description="Helical" evidence="1">
    <location>
        <begin position="240"/>
        <end position="260"/>
    </location>
</feature>
<protein>
    <recommendedName>
        <fullName evidence="1">ATP synthase subunit a</fullName>
    </recommendedName>
    <alternativeName>
        <fullName evidence="1">ATP synthase F0 sector subunit a</fullName>
    </alternativeName>
    <alternativeName>
        <fullName evidence="1">F-ATPase subunit 6</fullName>
    </alternativeName>
</protein>